<protein>
    <recommendedName>
        <fullName evidence="1">Small ribosomal subunit protein uS19</fullName>
    </recommendedName>
    <alternativeName>
        <fullName evidence="2">30S ribosomal protein S19</fullName>
    </alternativeName>
</protein>
<feature type="chain" id="PRO_1000127994" description="Small ribosomal subunit protein uS19">
    <location>
        <begin position="1"/>
        <end position="92"/>
    </location>
</feature>
<gene>
    <name evidence="1" type="primary">rpsS</name>
    <name type="ordered locus">LAR_1390</name>
</gene>
<name>RS19_LIMRJ</name>
<accession>B2G8X4</accession>
<dbReference type="EMBL" id="AP007281">
    <property type="protein sequence ID" value="BAG25906.1"/>
    <property type="molecule type" value="Genomic_DNA"/>
</dbReference>
<dbReference type="RefSeq" id="WP_003664560.1">
    <property type="nucleotide sequence ID" value="NC_010609.1"/>
</dbReference>
<dbReference type="SMR" id="B2G8X4"/>
<dbReference type="GeneID" id="77191475"/>
<dbReference type="KEGG" id="lrf:LAR_1390"/>
<dbReference type="HOGENOM" id="CLU_144911_0_1_9"/>
<dbReference type="GO" id="GO:0005737">
    <property type="term" value="C:cytoplasm"/>
    <property type="evidence" value="ECO:0007669"/>
    <property type="project" value="UniProtKB-ARBA"/>
</dbReference>
<dbReference type="GO" id="GO:0015935">
    <property type="term" value="C:small ribosomal subunit"/>
    <property type="evidence" value="ECO:0007669"/>
    <property type="project" value="InterPro"/>
</dbReference>
<dbReference type="GO" id="GO:0019843">
    <property type="term" value="F:rRNA binding"/>
    <property type="evidence" value="ECO:0007669"/>
    <property type="project" value="UniProtKB-UniRule"/>
</dbReference>
<dbReference type="GO" id="GO:0003735">
    <property type="term" value="F:structural constituent of ribosome"/>
    <property type="evidence" value="ECO:0007669"/>
    <property type="project" value="InterPro"/>
</dbReference>
<dbReference type="GO" id="GO:0000028">
    <property type="term" value="P:ribosomal small subunit assembly"/>
    <property type="evidence" value="ECO:0007669"/>
    <property type="project" value="TreeGrafter"/>
</dbReference>
<dbReference type="GO" id="GO:0006412">
    <property type="term" value="P:translation"/>
    <property type="evidence" value="ECO:0007669"/>
    <property type="project" value="UniProtKB-UniRule"/>
</dbReference>
<dbReference type="FunFam" id="3.30.860.10:FF:000001">
    <property type="entry name" value="30S ribosomal protein S19"/>
    <property type="match status" value="1"/>
</dbReference>
<dbReference type="Gene3D" id="3.30.860.10">
    <property type="entry name" value="30s Ribosomal Protein S19, Chain A"/>
    <property type="match status" value="1"/>
</dbReference>
<dbReference type="HAMAP" id="MF_00531">
    <property type="entry name" value="Ribosomal_uS19"/>
    <property type="match status" value="1"/>
</dbReference>
<dbReference type="InterPro" id="IPR002222">
    <property type="entry name" value="Ribosomal_uS19"/>
</dbReference>
<dbReference type="InterPro" id="IPR005732">
    <property type="entry name" value="Ribosomal_uS19_bac-type"/>
</dbReference>
<dbReference type="InterPro" id="IPR020934">
    <property type="entry name" value="Ribosomal_uS19_CS"/>
</dbReference>
<dbReference type="InterPro" id="IPR023575">
    <property type="entry name" value="Ribosomal_uS19_SF"/>
</dbReference>
<dbReference type="NCBIfam" id="TIGR01050">
    <property type="entry name" value="rpsS_bact"/>
    <property type="match status" value="1"/>
</dbReference>
<dbReference type="PANTHER" id="PTHR11880">
    <property type="entry name" value="RIBOSOMAL PROTEIN S19P FAMILY MEMBER"/>
    <property type="match status" value="1"/>
</dbReference>
<dbReference type="PANTHER" id="PTHR11880:SF8">
    <property type="entry name" value="SMALL RIBOSOMAL SUBUNIT PROTEIN US19M"/>
    <property type="match status" value="1"/>
</dbReference>
<dbReference type="Pfam" id="PF00203">
    <property type="entry name" value="Ribosomal_S19"/>
    <property type="match status" value="1"/>
</dbReference>
<dbReference type="PIRSF" id="PIRSF002144">
    <property type="entry name" value="Ribosomal_S19"/>
    <property type="match status" value="1"/>
</dbReference>
<dbReference type="PRINTS" id="PR00975">
    <property type="entry name" value="RIBOSOMALS19"/>
</dbReference>
<dbReference type="SUPFAM" id="SSF54570">
    <property type="entry name" value="Ribosomal protein S19"/>
    <property type="match status" value="1"/>
</dbReference>
<dbReference type="PROSITE" id="PS00323">
    <property type="entry name" value="RIBOSOMAL_S19"/>
    <property type="match status" value="1"/>
</dbReference>
<keyword id="KW-0687">Ribonucleoprotein</keyword>
<keyword id="KW-0689">Ribosomal protein</keyword>
<keyword id="KW-0694">RNA-binding</keyword>
<keyword id="KW-0699">rRNA-binding</keyword>
<comment type="function">
    <text evidence="1">Protein S19 forms a complex with S13 that binds strongly to the 16S ribosomal RNA.</text>
</comment>
<comment type="similarity">
    <text evidence="1">Belongs to the universal ribosomal protein uS19 family.</text>
</comment>
<proteinExistence type="inferred from homology"/>
<organism>
    <name type="scientific">Limosilactobacillus reuteri subsp. reuteri (strain JCM 1112)</name>
    <name type="common">Lactobacillus reuteri</name>
    <dbReference type="NCBI Taxonomy" id="557433"/>
    <lineage>
        <taxon>Bacteria</taxon>
        <taxon>Bacillati</taxon>
        <taxon>Bacillota</taxon>
        <taxon>Bacilli</taxon>
        <taxon>Lactobacillales</taxon>
        <taxon>Lactobacillaceae</taxon>
        <taxon>Limosilactobacillus</taxon>
    </lineage>
</organism>
<sequence>MGRSLKKGPFADASLLKKVKEQEGSEKKTVIKTWSRRSTIFPSFIGYTFAVYDGRKHVPVYVQEDMVGHKLGEFVPTRTFHGHASDDKKTGK</sequence>
<reference key="1">
    <citation type="journal article" date="2008" name="DNA Res.">
        <title>Comparative genome analysis of Lactobacillus reuteri and Lactobacillus fermentum reveal a genomic island for reuterin and cobalamin production.</title>
        <authorList>
            <person name="Morita H."/>
            <person name="Toh H."/>
            <person name="Fukuda S."/>
            <person name="Horikawa H."/>
            <person name="Oshima K."/>
            <person name="Suzuki T."/>
            <person name="Murakami M."/>
            <person name="Hisamatsu S."/>
            <person name="Kato Y."/>
            <person name="Takizawa T."/>
            <person name="Fukuoka H."/>
            <person name="Yoshimura T."/>
            <person name="Itoh K."/>
            <person name="O'Sullivan D.J."/>
            <person name="McKay L.L."/>
            <person name="Ohno H."/>
            <person name="Kikuchi J."/>
            <person name="Masaoka T."/>
            <person name="Hattori M."/>
        </authorList>
    </citation>
    <scope>NUCLEOTIDE SEQUENCE [LARGE SCALE GENOMIC DNA]</scope>
    <source>
        <strain>JCM 1112</strain>
    </source>
</reference>
<evidence type="ECO:0000255" key="1">
    <source>
        <dbReference type="HAMAP-Rule" id="MF_00531"/>
    </source>
</evidence>
<evidence type="ECO:0000305" key="2"/>